<proteinExistence type="predicted"/>
<keyword id="KW-1185">Reference proteome</keyword>
<evidence type="ECO:0000305" key="1"/>
<comment type="sequence caution" evidence="1">
    <conflict type="erroneous initiation">
        <sequence resource="EMBL-CDS" id="AAK45661"/>
    </conflict>
</comment>
<accession>P9WM10</accession>
<accession>L0T9D8</accession>
<accession>Q11025</accession>
<protein>
    <recommendedName>
        <fullName>Uncharacterized protein MT1398</fullName>
    </recommendedName>
</protein>
<feature type="chain" id="PRO_0000427385" description="Uncharacterized protein MT1398">
    <location>
        <begin position="1"/>
        <end position="715"/>
    </location>
</feature>
<sequence length="715" mass="78181">MTIPHEGGSTGILVLRDDDHDDVLVLDRLRSDPSIEFVDRFAEQLAGVRRLLPQPDPDLLEEAKRWAYYPWRRMVVAILGLRGFRAVRLDRNRHLITAEEQRALHALRVGVVGLSAGHAIAYTLAAEGACGTLRLADFDKIELSNLNRVPVGVFDIGLNKAMIAARRIAELDPYLAVDLVTSGLSPESVDEFLDGLDVVIEECDSLDIKVILRQAACARGVPVLMATSDRGLVDVERYDVEPGRPIFHGLLGDIDADKLCGLTTKDKVPHVLNILDCQELSARCAASMIEVDQTLWGWPQLAGDIWVGAATVAEAVRRIGLGEPLESGRVRVDVSAALDRLDQPPMPSRGNGWLLESVPPTAPAEPQPTSEIVAQAAIRAPSGGNVQPWHVVAKQHSLTIRLAPEHTSAMDIAFRGSAVAVGAAMFNARVAAAAHRVLGSVEFDESQPDSPLQATMHFGRGDDPSLAALYRPMLLRTTNRHHGMPGHVHPATVELLTNTAAAEGARLQLLLSRNEIDRAATILAAADRIRYLTPRLHEEMMSELRWPGDPSLDAGIDVRSLELDSGELRVLDILRRSDVVARLAQWDCGTALEDNTNERVSASSALAIVYVDGATLTDFARGGSAMQAVWIVAQQHGLAVQPMSPIFLYARGRHDLDQASPHFAAQLHRLQLDFRELVKPGKEGHEVLIFRLFHAPPPSVCSRRRVRHAIPEPHR</sequence>
<organism>
    <name type="scientific">Mycobacterium tuberculosis (strain CDC 1551 / Oshkosh)</name>
    <dbReference type="NCBI Taxonomy" id="83331"/>
    <lineage>
        <taxon>Bacteria</taxon>
        <taxon>Bacillati</taxon>
        <taxon>Actinomycetota</taxon>
        <taxon>Actinomycetes</taxon>
        <taxon>Mycobacteriales</taxon>
        <taxon>Mycobacteriaceae</taxon>
        <taxon>Mycobacterium</taxon>
        <taxon>Mycobacterium tuberculosis complex</taxon>
    </lineage>
</organism>
<name>Y1355_MYCTO</name>
<reference key="1">
    <citation type="journal article" date="2002" name="J. Bacteriol.">
        <title>Whole-genome comparison of Mycobacterium tuberculosis clinical and laboratory strains.</title>
        <authorList>
            <person name="Fleischmann R.D."/>
            <person name="Alland D."/>
            <person name="Eisen J.A."/>
            <person name="Carpenter L."/>
            <person name="White O."/>
            <person name="Peterson J.D."/>
            <person name="DeBoy R.T."/>
            <person name="Dodson R.J."/>
            <person name="Gwinn M.L."/>
            <person name="Haft D.H."/>
            <person name="Hickey E.K."/>
            <person name="Kolonay J.F."/>
            <person name="Nelson W.C."/>
            <person name="Umayam L.A."/>
            <person name="Ermolaeva M.D."/>
            <person name="Salzberg S.L."/>
            <person name="Delcher A."/>
            <person name="Utterback T.R."/>
            <person name="Weidman J.F."/>
            <person name="Khouri H.M."/>
            <person name="Gill J."/>
            <person name="Mikula A."/>
            <person name="Bishai W."/>
            <person name="Jacobs W.R. Jr."/>
            <person name="Venter J.C."/>
            <person name="Fraser C.M."/>
        </authorList>
    </citation>
    <scope>NUCLEOTIDE SEQUENCE [LARGE SCALE GENOMIC DNA]</scope>
    <source>
        <strain>CDC 1551 / Oshkosh</strain>
    </source>
</reference>
<dbReference type="EMBL" id="AE000516">
    <property type="protein sequence ID" value="AAK45661.1"/>
    <property type="status" value="ALT_INIT"/>
    <property type="molecule type" value="Genomic_DNA"/>
</dbReference>
<dbReference type="PIR" id="B70741">
    <property type="entry name" value="B70741"/>
</dbReference>
<dbReference type="RefSeq" id="WP_003898838.1">
    <property type="nucleotide sequence ID" value="NZ_KK341227.1"/>
</dbReference>
<dbReference type="SMR" id="P9WM10"/>
<dbReference type="KEGG" id="mtc:MT1398"/>
<dbReference type="PATRIC" id="fig|83331.31.peg.1505"/>
<dbReference type="HOGENOM" id="CLU_020676_0_0_11"/>
<dbReference type="Proteomes" id="UP000001020">
    <property type="component" value="Chromosome"/>
</dbReference>
<dbReference type="GO" id="GO:0016491">
    <property type="term" value="F:oxidoreductase activity"/>
    <property type="evidence" value="ECO:0007669"/>
    <property type="project" value="InterPro"/>
</dbReference>
<dbReference type="GO" id="GO:0061503">
    <property type="term" value="F:tRNA threonylcarbamoyladenosine dehydratase"/>
    <property type="evidence" value="ECO:0007669"/>
    <property type="project" value="TreeGrafter"/>
</dbReference>
<dbReference type="GO" id="GO:0008641">
    <property type="term" value="F:ubiquitin-like modifier activating enzyme activity"/>
    <property type="evidence" value="ECO:0007669"/>
    <property type="project" value="InterPro"/>
</dbReference>
<dbReference type="GO" id="GO:0061504">
    <property type="term" value="P:cyclic threonylcarbamoyladenosine biosynthetic process"/>
    <property type="evidence" value="ECO:0007669"/>
    <property type="project" value="TreeGrafter"/>
</dbReference>
<dbReference type="CDD" id="cd01483">
    <property type="entry name" value="E1_enzyme_family"/>
    <property type="match status" value="1"/>
</dbReference>
<dbReference type="Gene3D" id="3.40.50.720">
    <property type="entry name" value="NAD(P)-binding Rossmann-like Domain"/>
    <property type="match status" value="1"/>
</dbReference>
<dbReference type="Gene3D" id="3.40.109.10">
    <property type="entry name" value="NADH Oxidase"/>
    <property type="match status" value="1"/>
</dbReference>
<dbReference type="InterPro" id="IPR000415">
    <property type="entry name" value="Nitroreductase-like"/>
</dbReference>
<dbReference type="InterPro" id="IPR045886">
    <property type="entry name" value="ThiF/MoeB/HesA"/>
</dbReference>
<dbReference type="InterPro" id="IPR000594">
    <property type="entry name" value="ThiF_NAD_FAD-bd"/>
</dbReference>
<dbReference type="InterPro" id="IPR035985">
    <property type="entry name" value="Ubiquitin-activating_enz"/>
</dbReference>
<dbReference type="NCBIfam" id="NF005901">
    <property type="entry name" value="PRK07877.1"/>
    <property type="match status" value="1"/>
</dbReference>
<dbReference type="PANTHER" id="PTHR43267:SF3">
    <property type="entry name" value="THIF PROTEIN"/>
    <property type="match status" value="1"/>
</dbReference>
<dbReference type="PANTHER" id="PTHR43267">
    <property type="entry name" value="TRNA THREONYLCARBAMOYLADENOSINE DEHYDRATASE"/>
    <property type="match status" value="1"/>
</dbReference>
<dbReference type="Pfam" id="PF00899">
    <property type="entry name" value="ThiF"/>
    <property type="match status" value="1"/>
</dbReference>
<dbReference type="SUPFAM" id="SSF69572">
    <property type="entry name" value="Activating enzymes of the ubiquitin-like proteins"/>
    <property type="match status" value="1"/>
</dbReference>
<dbReference type="SUPFAM" id="SSF55469">
    <property type="entry name" value="FMN-dependent nitroreductase-like"/>
    <property type="match status" value="1"/>
</dbReference>
<gene>
    <name type="ordered locus">MT1398</name>
</gene>